<protein>
    <recommendedName>
        <fullName>H/ACA ribonucleoprotein complex subunit DKC1</fullName>
        <ecNumber evidence="2">5.4.99.-</ecNumber>
    </recommendedName>
    <alternativeName>
        <fullName>Dyskerin</fullName>
    </alternativeName>
    <alternativeName>
        <fullName>Nopp140-associated protein of 57 kDa</fullName>
    </alternativeName>
    <alternativeName>
        <fullName>Nucleolar protein NAP57</fullName>
    </alternativeName>
    <alternativeName>
        <fullName>Nucleolar protein family A member 4</fullName>
    </alternativeName>
    <alternativeName>
        <fullName>snoRNP protein DKC1</fullName>
    </alternativeName>
</protein>
<proteinExistence type="evidence at protein level"/>
<accession>Q9ESX5</accession>
<accession>Q3UWE5</accession>
<dbReference type="EC" id="5.4.99.-" evidence="2"/>
<dbReference type="EMBL" id="AJ250973">
    <property type="protein sequence ID" value="CAC04528.1"/>
    <property type="molecule type" value="Genomic_DNA"/>
</dbReference>
<dbReference type="EMBL" id="AJ250972">
    <property type="protein sequence ID" value="CAC04528.1"/>
    <property type="status" value="JOINED"/>
    <property type="molecule type" value="Genomic_DNA"/>
</dbReference>
<dbReference type="EMBL" id="AJ250974">
    <property type="protein sequence ID" value="CAC04528.1"/>
    <property type="status" value="JOINED"/>
    <property type="molecule type" value="Genomic_DNA"/>
</dbReference>
<dbReference type="EMBL" id="AJ250975">
    <property type="protein sequence ID" value="CAC04528.1"/>
    <property type="status" value="JOINED"/>
    <property type="molecule type" value="Genomic_DNA"/>
</dbReference>
<dbReference type="EMBL" id="AJ250976">
    <property type="protein sequence ID" value="CAC04528.1"/>
    <property type="status" value="JOINED"/>
    <property type="molecule type" value="Genomic_DNA"/>
</dbReference>
<dbReference type="EMBL" id="AJ250978">
    <property type="protein sequence ID" value="CAC04528.1"/>
    <property type="status" value="JOINED"/>
    <property type="molecule type" value="Genomic_DNA"/>
</dbReference>
<dbReference type="EMBL" id="AJ250980">
    <property type="protein sequence ID" value="CAC04528.1"/>
    <property type="status" value="JOINED"/>
    <property type="molecule type" value="Genomic_DNA"/>
</dbReference>
<dbReference type="EMBL" id="AJ250981">
    <property type="protein sequence ID" value="CAC04528.1"/>
    <property type="status" value="JOINED"/>
    <property type="molecule type" value="Genomic_DNA"/>
</dbReference>
<dbReference type="EMBL" id="AJ250979">
    <property type="protein sequence ID" value="CAC04528.1"/>
    <property type="status" value="JOINED"/>
    <property type="molecule type" value="Genomic_DNA"/>
</dbReference>
<dbReference type="EMBL" id="AJ250977">
    <property type="protein sequence ID" value="CAC04528.1"/>
    <property type="status" value="JOINED"/>
    <property type="molecule type" value="Genomic_DNA"/>
</dbReference>
<dbReference type="EMBL" id="AK136418">
    <property type="protein sequence ID" value="BAE22970.1"/>
    <property type="molecule type" value="mRNA"/>
</dbReference>
<dbReference type="EMBL" id="AL808110">
    <property type="status" value="NOT_ANNOTATED_CDS"/>
    <property type="molecule type" value="Genomic_DNA"/>
</dbReference>
<dbReference type="CCDS" id="CCDS41029.1"/>
<dbReference type="RefSeq" id="NP_001025478.1">
    <property type="nucleotide sequence ID" value="NM_001030307.2"/>
</dbReference>
<dbReference type="SMR" id="Q9ESX5"/>
<dbReference type="BioGRID" id="232777">
    <property type="interactions" value="19"/>
</dbReference>
<dbReference type="ComplexPortal" id="CPX-1124">
    <property type="entry name" value="Telomerase holoenzyme complex"/>
</dbReference>
<dbReference type="FunCoup" id="Q9ESX5">
    <property type="interactions" value="3687"/>
</dbReference>
<dbReference type="IntAct" id="Q9ESX5">
    <property type="interactions" value="3"/>
</dbReference>
<dbReference type="MINT" id="Q9ESX5"/>
<dbReference type="STRING" id="10090.ENSMUSP00000033776"/>
<dbReference type="GlyGen" id="Q9ESX5">
    <property type="glycosylation" value="2 sites, 1 N-linked glycan (1 site), 1 O-linked glycan (1 site)"/>
</dbReference>
<dbReference type="iPTMnet" id="Q9ESX5"/>
<dbReference type="PhosphoSitePlus" id="Q9ESX5"/>
<dbReference type="SwissPalm" id="Q9ESX5"/>
<dbReference type="jPOST" id="Q9ESX5"/>
<dbReference type="PaxDb" id="10090-ENSMUSP00000033776"/>
<dbReference type="PeptideAtlas" id="Q9ESX5"/>
<dbReference type="ProteomicsDB" id="279717"/>
<dbReference type="Pumba" id="Q9ESX5"/>
<dbReference type="Antibodypedia" id="418">
    <property type="antibodies" value="418 antibodies from 38 providers"/>
</dbReference>
<dbReference type="Ensembl" id="ENSMUST00000033776.15">
    <property type="protein sequence ID" value="ENSMUSP00000033776.9"/>
    <property type="gene ID" value="ENSMUSG00000031403.15"/>
</dbReference>
<dbReference type="GeneID" id="245474"/>
<dbReference type="KEGG" id="mmu:245474"/>
<dbReference type="UCSC" id="uc009tpo.2">
    <property type="organism name" value="mouse"/>
</dbReference>
<dbReference type="AGR" id="MGI:1861727"/>
<dbReference type="CTD" id="1736"/>
<dbReference type="MGI" id="MGI:1861727">
    <property type="gene designation" value="Dkc1"/>
</dbReference>
<dbReference type="VEuPathDB" id="HostDB:ENSMUSG00000031403"/>
<dbReference type="eggNOG" id="KOG2529">
    <property type="taxonomic scope" value="Eukaryota"/>
</dbReference>
<dbReference type="GeneTree" id="ENSGT00510000047092"/>
<dbReference type="HOGENOM" id="CLU_032087_3_2_1"/>
<dbReference type="InParanoid" id="Q9ESX5"/>
<dbReference type="OMA" id="KYGRTNE"/>
<dbReference type="OrthoDB" id="10250002at2759"/>
<dbReference type="PhylomeDB" id="Q9ESX5"/>
<dbReference type="TreeFam" id="TF300354"/>
<dbReference type="Reactome" id="R-MMU-171319">
    <property type="pathway name" value="Telomere Extension By Telomerase"/>
</dbReference>
<dbReference type="BioGRID-ORCS" id="245474">
    <property type="hits" value="28 hits in 76 CRISPR screens"/>
</dbReference>
<dbReference type="ChiTaRS" id="Dkc1">
    <property type="organism name" value="mouse"/>
</dbReference>
<dbReference type="PRO" id="PR:Q9ESX5"/>
<dbReference type="Proteomes" id="UP000000589">
    <property type="component" value="Chromosome X"/>
</dbReference>
<dbReference type="RNAct" id="Q9ESX5">
    <property type="molecule type" value="protein"/>
</dbReference>
<dbReference type="Bgee" id="ENSMUSG00000031403">
    <property type="expression patterns" value="Expressed in manus and 244 other cell types or tissues"/>
</dbReference>
<dbReference type="ExpressionAtlas" id="Q9ESX5">
    <property type="expression patterns" value="baseline and differential"/>
</dbReference>
<dbReference type="GO" id="GO:0031429">
    <property type="term" value="C:box H/ACA snoRNP complex"/>
    <property type="evidence" value="ECO:0007669"/>
    <property type="project" value="Ensembl"/>
</dbReference>
<dbReference type="GO" id="GO:0090661">
    <property type="term" value="C:box H/ACA telomerase RNP complex"/>
    <property type="evidence" value="ECO:0007669"/>
    <property type="project" value="Ensembl"/>
</dbReference>
<dbReference type="GO" id="GO:0015030">
    <property type="term" value="C:Cajal body"/>
    <property type="evidence" value="ECO:0000314"/>
    <property type="project" value="MGI"/>
</dbReference>
<dbReference type="GO" id="GO:0001650">
    <property type="term" value="C:fibrillar center"/>
    <property type="evidence" value="ECO:0007669"/>
    <property type="project" value="Ensembl"/>
</dbReference>
<dbReference type="GO" id="GO:0005730">
    <property type="term" value="C:nucleolus"/>
    <property type="evidence" value="ECO:0000314"/>
    <property type="project" value="MGI"/>
</dbReference>
<dbReference type="GO" id="GO:0005697">
    <property type="term" value="C:telomerase holoenzyme complex"/>
    <property type="evidence" value="ECO:0000250"/>
    <property type="project" value="UniProtKB"/>
</dbReference>
<dbReference type="GO" id="GO:0034513">
    <property type="term" value="F:box H/ACA snoRNA binding"/>
    <property type="evidence" value="ECO:0007669"/>
    <property type="project" value="Ensembl"/>
</dbReference>
<dbReference type="GO" id="GO:0009982">
    <property type="term" value="F:pseudouridine synthase activity"/>
    <property type="evidence" value="ECO:0000250"/>
    <property type="project" value="UniProtKB"/>
</dbReference>
<dbReference type="GO" id="GO:0003720">
    <property type="term" value="F:telomerase activity"/>
    <property type="evidence" value="ECO:0007669"/>
    <property type="project" value="Ensembl"/>
</dbReference>
<dbReference type="GO" id="GO:0070034">
    <property type="term" value="F:telomerase RNA binding"/>
    <property type="evidence" value="ECO:0007669"/>
    <property type="project" value="Ensembl"/>
</dbReference>
<dbReference type="GO" id="GO:0033979">
    <property type="term" value="P:box H/ACA sno(s)RNA metabolic process"/>
    <property type="evidence" value="ECO:0000315"/>
    <property type="project" value="MGI"/>
</dbReference>
<dbReference type="GO" id="GO:0000455">
    <property type="term" value="P:enzyme-directed rRNA pseudouridine synthesis"/>
    <property type="evidence" value="ECO:0000250"/>
    <property type="project" value="UniProtKB"/>
</dbReference>
<dbReference type="GO" id="GO:1904874">
    <property type="term" value="P:positive regulation of telomerase RNA localization to Cajal body"/>
    <property type="evidence" value="ECO:0007669"/>
    <property type="project" value="Ensembl"/>
</dbReference>
<dbReference type="GO" id="GO:0032212">
    <property type="term" value="P:positive regulation of telomere maintenance via telomerase"/>
    <property type="evidence" value="ECO:0000315"/>
    <property type="project" value="MGI"/>
</dbReference>
<dbReference type="GO" id="GO:0031118">
    <property type="term" value="P:rRNA pseudouridine synthesis"/>
    <property type="evidence" value="ECO:0000315"/>
    <property type="project" value="MGI"/>
</dbReference>
<dbReference type="GO" id="GO:0090666">
    <property type="term" value="P:scaRNA localization to Cajal body"/>
    <property type="evidence" value="ECO:0007669"/>
    <property type="project" value="Ensembl"/>
</dbReference>
<dbReference type="GO" id="GO:1905323">
    <property type="term" value="P:telomerase holoenzyme complex assembly"/>
    <property type="evidence" value="ECO:0000315"/>
    <property type="project" value="MGI"/>
</dbReference>
<dbReference type="GO" id="GO:0090669">
    <property type="term" value="P:telomerase RNA stabilization"/>
    <property type="evidence" value="ECO:0007669"/>
    <property type="project" value="Ensembl"/>
</dbReference>
<dbReference type="GO" id="GO:0007004">
    <property type="term" value="P:telomere maintenance via telomerase"/>
    <property type="evidence" value="ECO:0000250"/>
    <property type="project" value="UniProtKB"/>
</dbReference>
<dbReference type="CDD" id="cd02572">
    <property type="entry name" value="PseudoU_synth_hDyskerin"/>
    <property type="match status" value="1"/>
</dbReference>
<dbReference type="CDD" id="cd21148">
    <property type="entry name" value="PUA_Cbf5"/>
    <property type="match status" value="1"/>
</dbReference>
<dbReference type="FunFam" id="3.30.2350.10:FF:000001">
    <property type="entry name" value="H/ACA ribonucleoprotein complex subunit CBF5"/>
    <property type="match status" value="1"/>
</dbReference>
<dbReference type="Gene3D" id="3.30.2350.10">
    <property type="entry name" value="Pseudouridine synthase"/>
    <property type="match status" value="1"/>
</dbReference>
<dbReference type="Gene3D" id="2.30.130.10">
    <property type="entry name" value="PUA domain"/>
    <property type="match status" value="1"/>
</dbReference>
<dbReference type="InterPro" id="IPR012960">
    <property type="entry name" value="Dyskerin-like"/>
</dbReference>
<dbReference type="InterPro" id="IPR020103">
    <property type="entry name" value="PsdUridine_synth_cat_dom_sf"/>
</dbReference>
<dbReference type="InterPro" id="IPR002501">
    <property type="entry name" value="PsdUridine_synth_N"/>
</dbReference>
<dbReference type="InterPro" id="IPR002478">
    <property type="entry name" value="PUA"/>
</dbReference>
<dbReference type="InterPro" id="IPR015947">
    <property type="entry name" value="PUA-like_sf"/>
</dbReference>
<dbReference type="InterPro" id="IPR036974">
    <property type="entry name" value="PUA_sf"/>
</dbReference>
<dbReference type="InterPro" id="IPR004802">
    <property type="entry name" value="tRNA_PsdUridine_synth_B_fam"/>
</dbReference>
<dbReference type="InterPro" id="IPR032819">
    <property type="entry name" value="TruB_C"/>
</dbReference>
<dbReference type="InterPro" id="IPR004521">
    <property type="entry name" value="Uncharacterised_CHP00451"/>
</dbReference>
<dbReference type="NCBIfam" id="TIGR00425">
    <property type="entry name" value="CBF5"/>
    <property type="match status" value="1"/>
</dbReference>
<dbReference type="NCBIfam" id="NF003280">
    <property type="entry name" value="PRK04270.1"/>
    <property type="match status" value="1"/>
</dbReference>
<dbReference type="NCBIfam" id="TIGR00451">
    <property type="entry name" value="unchar_dom_2"/>
    <property type="match status" value="1"/>
</dbReference>
<dbReference type="PANTHER" id="PTHR23127">
    <property type="entry name" value="CENTROMERE/MICROTUBULE BINDING PROTEIN CBF5"/>
    <property type="match status" value="1"/>
</dbReference>
<dbReference type="PANTHER" id="PTHR23127:SF0">
    <property type="entry name" value="H_ACA RIBONUCLEOPROTEIN COMPLEX SUBUNIT DKC1"/>
    <property type="match status" value="1"/>
</dbReference>
<dbReference type="Pfam" id="PF08068">
    <property type="entry name" value="DKCLD"/>
    <property type="match status" value="1"/>
</dbReference>
<dbReference type="Pfam" id="PF01472">
    <property type="entry name" value="PUA"/>
    <property type="match status" value="1"/>
</dbReference>
<dbReference type="Pfam" id="PF16198">
    <property type="entry name" value="TruB_C_2"/>
    <property type="match status" value="1"/>
</dbReference>
<dbReference type="Pfam" id="PF01509">
    <property type="entry name" value="TruB_N"/>
    <property type="match status" value="1"/>
</dbReference>
<dbReference type="SMART" id="SM01136">
    <property type="entry name" value="DKCLD"/>
    <property type="match status" value="1"/>
</dbReference>
<dbReference type="SMART" id="SM00359">
    <property type="entry name" value="PUA"/>
    <property type="match status" value="1"/>
</dbReference>
<dbReference type="SUPFAM" id="SSF55120">
    <property type="entry name" value="Pseudouridine synthase"/>
    <property type="match status" value="1"/>
</dbReference>
<dbReference type="SUPFAM" id="SSF88697">
    <property type="entry name" value="PUA domain-like"/>
    <property type="match status" value="1"/>
</dbReference>
<dbReference type="PROSITE" id="PS50890">
    <property type="entry name" value="PUA"/>
    <property type="match status" value="1"/>
</dbReference>
<feature type="initiator methionine" description="Removed" evidence="2">
    <location>
        <position position="1"/>
    </location>
</feature>
<feature type="chain" id="PRO_0000121984" description="H/ACA ribonucleoprotein complex subunit DKC1">
    <location>
        <begin position="2"/>
        <end position="509"/>
    </location>
</feature>
<feature type="domain" description="PUA" evidence="5">
    <location>
        <begin position="297"/>
        <end position="372"/>
    </location>
</feature>
<feature type="region of interest" description="Disordered" evidence="6">
    <location>
        <begin position="1"/>
        <end position="24"/>
    </location>
</feature>
<feature type="region of interest" description="Nucleolar localization" evidence="1">
    <location>
        <begin position="2"/>
        <end position="21"/>
    </location>
</feature>
<feature type="region of interest" description="Nuclear and nucleolar localization" evidence="1">
    <location>
        <begin position="446"/>
        <end position="509"/>
    </location>
</feature>
<feature type="region of interest" description="Disordered" evidence="6">
    <location>
        <begin position="447"/>
        <end position="509"/>
    </location>
</feature>
<feature type="compositionally biased region" description="Basic residues" evidence="6">
    <location>
        <begin position="10"/>
        <end position="19"/>
    </location>
</feature>
<feature type="compositionally biased region" description="Basic residues" evidence="6">
    <location>
        <begin position="466"/>
        <end position="476"/>
    </location>
</feature>
<feature type="active site" description="Nucleophile" evidence="4">
    <location>
        <position position="125"/>
    </location>
</feature>
<feature type="modified residue" description="N-acetylalanine" evidence="2">
    <location>
        <position position="2"/>
    </location>
</feature>
<feature type="modified residue" description="Phosphoserine" evidence="2">
    <location>
        <position position="387"/>
    </location>
</feature>
<feature type="modified residue" description="Phosphoserine" evidence="12 13 14 16">
    <location>
        <position position="451"/>
    </location>
</feature>
<feature type="modified residue" description="Phosphoserine" evidence="12 13 14 16">
    <location>
        <position position="453"/>
    </location>
</feature>
<feature type="modified residue" description="Phosphoserine" evidence="13 14 16">
    <location>
        <position position="455"/>
    </location>
</feature>
<feature type="modified residue" description="Phosphothreonine" evidence="16">
    <location>
        <position position="458"/>
    </location>
</feature>
<feature type="modified residue" description="Phosphoserine" evidence="12 16">
    <location>
        <position position="481"/>
    </location>
</feature>
<feature type="modified residue" description="Phosphothreonine" evidence="16">
    <location>
        <position position="485"/>
    </location>
</feature>
<feature type="modified residue" description="Phosphoserine" evidence="11 14 15 16">
    <location>
        <position position="508"/>
    </location>
</feature>
<feature type="cross-link" description="Glycyl lysine isopeptide (Lys-Gly) (interchain with G-Cter in SUMO2)" evidence="2">
    <location>
        <position position="20"/>
    </location>
</feature>
<feature type="cross-link" description="Glycyl lysine isopeptide (Lys-Gly) (interchain with G-Cter in SUMO2)" evidence="2">
    <location>
        <position position="39"/>
    </location>
</feature>
<feature type="cross-link" description="Glycyl lysine isopeptide (Lys-Gly) (interchain with G-Cter in SUMO2)" evidence="2">
    <location>
        <position position="43"/>
    </location>
</feature>
<feature type="cross-link" description="Glycyl lysine isopeptide (Lys-Gly) (interchain with G-Cter in SUMO2)" evidence="2">
    <location>
        <position position="191"/>
    </location>
</feature>
<feature type="cross-link" description="Glycyl lysine isopeptide (Lys-Gly) (interchain with G-Cter in SUMO2)" evidence="2">
    <location>
        <position position="394"/>
    </location>
</feature>
<feature type="cross-link" description="Glycyl lysine isopeptide (Lys-Gly) (interchain with G-Cter in SUMO1); alternate" evidence="2">
    <location>
        <position position="413"/>
    </location>
</feature>
<feature type="cross-link" description="Glycyl lysine isopeptide (Lys-Gly) (interchain with G-Cter in SUMO2); alternate" evidence="2">
    <location>
        <position position="413"/>
    </location>
</feature>
<feature type="cross-link" description="Glycyl lysine isopeptide (Lys-Gly) (interchain with G-Cter in SUMO2)" evidence="2">
    <location>
        <position position="424"/>
    </location>
</feature>
<feature type="mutagenesis site" description="Destabilization of TERC, impaired telomerase function, and reduced rRNA pseudouridylation and pre-rRNA processing." evidence="9">
    <original>A</original>
    <variation>V</variation>
    <location>
        <position position="353"/>
    </location>
</feature>
<feature type="mutagenesis site" description="Reduced rRNA pseudouridylation and pre-rRNA processing." evidence="9">
    <original>G</original>
    <variation>E</variation>
    <location>
        <position position="402"/>
    </location>
</feature>
<feature type="sequence conflict" description="In Ref. 1; CAC04528." evidence="10" ref="1">
    <original>GLLLGVGG</original>
    <variation>CFVLGSGC</variation>
    <location>
        <begin position="234"/>
        <end position="241"/>
    </location>
</feature>
<gene>
    <name type="primary">Dkc1</name>
</gene>
<reference key="1">
    <citation type="journal article" date="2000" name="Genomics">
        <title>Gene structure and expression of the mouse dyskeratosis congenita gene, dkc1.</title>
        <authorList>
            <person name="Heiss N.S."/>
            <person name="Baechner D."/>
            <person name="Salowsky R."/>
            <person name="Kolb A."/>
            <person name="Kioschis P."/>
            <person name="Poustka A."/>
        </authorList>
    </citation>
    <scope>NUCLEOTIDE SEQUENCE [GENOMIC DNA]</scope>
    <scope>TISSUE SPECIFICITY</scope>
    <scope>DEVELOPMENTAL STAGE</scope>
    <source>
        <strain>129/Ola</strain>
    </source>
</reference>
<reference key="2">
    <citation type="journal article" date="2005" name="Science">
        <title>The transcriptional landscape of the mammalian genome.</title>
        <authorList>
            <person name="Carninci P."/>
            <person name="Kasukawa T."/>
            <person name="Katayama S."/>
            <person name="Gough J."/>
            <person name="Frith M.C."/>
            <person name="Maeda N."/>
            <person name="Oyama R."/>
            <person name="Ravasi T."/>
            <person name="Lenhard B."/>
            <person name="Wells C."/>
            <person name="Kodzius R."/>
            <person name="Shimokawa K."/>
            <person name="Bajic V.B."/>
            <person name="Brenner S.E."/>
            <person name="Batalov S."/>
            <person name="Forrest A.R."/>
            <person name="Zavolan M."/>
            <person name="Davis M.J."/>
            <person name="Wilming L.G."/>
            <person name="Aidinis V."/>
            <person name="Allen J.E."/>
            <person name="Ambesi-Impiombato A."/>
            <person name="Apweiler R."/>
            <person name="Aturaliya R.N."/>
            <person name="Bailey T.L."/>
            <person name="Bansal M."/>
            <person name="Baxter L."/>
            <person name="Beisel K.W."/>
            <person name="Bersano T."/>
            <person name="Bono H."/>
            <person name="Chalk A.M."/>
            <person name="Chiu K.P."/>
            <person name="Choudhary V."/>
            <person name="Christoffels A."/>
            <person name="Clutterbuck D.R."/>
            <person name="Crowe M.L."/>
            <person name="Dalla E."/>
            <person name="Dalrymple B.P."/>
            <person name="de Bono B."/>
            <person name="Della Gatta G."/>
            <person name="di Bernardo D."/>
            <person name="Down T."/>
            <person name="Engstrom P."/>
            <person name="Fagiolini M."/>
            <person name="Faulkner G."/>
            <person name="Fletcher C.F."/>
            <person name="Fukushima T."/>
            <person name="Furuno M."/>
            <person name="Futaki S."/>
            <person name="Gariboldi M."/>
            <person name="Georgii-Hemming P."/>
            <person name="Gingeras T.R."/>
            <person name="Gojobori T."/>
            <person name="Green R.E."/>
            <person name="Gustincich S."/>
            <person name="Harbers M."/>
            <person name="Hayashi Y."/>
            <person name="Hensch T.K."/>
            <person name="Hirokawa N."/>
            <person name="Hill D."/>
            <person name="Huminiecki L."/>
            <person name="Iacono M."/>
            <person name="Ikeo K."/>
            <person name="Iwama A."/>
            <person name="Ishikawa T."/>
            <person name="Jakt M."/>
            <person name="Kanapin A."/>
            <person name="Katoh M."/>
            <person name="Kawasawa Y."/>
            <person name="Kelso J."/>
            <person name="Kitamura H."/>
            <person name="Kitano H."/>
            <person name="Kollias G."/>
            <person name="Krishnan S.P."/>
            <person name="Kruger A."/>
            <person name="Kummerfeld S.K."/>
            <person name="Kurochkin I.V."/>
            <person name="Lareau L.F."/>
            <person name="Lazarevic D."/>
            <person name="Lipovich L."/>
            <person name="Liu J."/>
            <person name="Liuni S."/>
            <person name="McWilliam S."/>
            <person name="Madan Babu M."/>
            <person name="Madera M."/>
            <person name="Marchionni L."/>
            <person name="Matsuda H."/>
            <person name="Matsuzawa S."/>
            <person name="Miki H."/>
            <person name="Mignone F."/>
            <person name="Miyake S."/>
            <person name="Morris K."/>
            <person name="Mottagui-Tabar S."/>
            <person name="Mulder N."/>
            <person name="Nakano N."/>
            <person name="Nakauchi H."/>
            <person name="Ng P."/>
            <person name="Nilsson R."/>
            <person name="Nishiguchi S."/>
            <person name="Nishikawa S."/>
            <person name="Nori F."/>
            <person name="Ohara O."/>
            <person name="Okazaki Y."/>
            <person name="Orlando V."/>
            <person name="Pang K.C."/>
            <person name="Pavan W.J."/>
            <person name="Pavesi G."/>
            <person name="Pesole G."/>
            <person name="Petrovsky N."/>
            <person name="Piazza S."/>
            <person name="Reed J."/>
            <person name="Reid J.F."/>
            <person name="Ring B.Z."/>
            <person name="Ringwald M."/>
            <person name="Rost B."/>
            <person name="Ruan Y."/>
            <person name="Salzberg S.L."/>
            <person name="Sandelin A."/>
            <person name="Schneider C."/>
            <person name="Schoenbach C."/>
            <person name="Sekiguchi K."/>
            <person name="Semple C.A."/>
            <person name="Seno S."/>
            <person name="Sessa L."/>
            <person name="Sheng Y."/>
            <person name="Shibata Y."/>
            <person name="Shimada H."/>
            <person name="Shimada K."/>
            <person name="Silva D."/>
            <person name="Sinclair B."/>
            <person name="Sperling S."/>
            <person name="Stupka E."/>
            <person name="Sugiura K."/>
            <person name="Sultana R."/>
            <person name="Takenaka Y."/>
            <person name="Taki K."/>
            <person name="Tammoja K."/>
            <person name="Tan S.L."/>
            <person name="Tang S."/>
            <person name="Taylor M.S."/>
            <person name="Tegner J."/>
            <person name="Teichmann S.A."/>
            <person name="Ueda H.R."/>
            <person name="van Nimwegen E."/>
            <person name="Verardo R."/>
            <person name="Wei C.L."/>
            <person name="Yagi K."/>
            <person name="Yamanishi H."/>
            <person name="Zabarovsky E."/>
            <person name="Zhu S."/>
            <person name="Zimmer A."/>
            <person name="Hide W."/>
            <person name="Bult C."/>
            <person name="Grimmond S.M."/>
            <person name="Teasdale R.D."/>
            <person name="Liu E.T."/>
            <person name="Brusic V."/>
            <person name="Quackenbush J."/>
            <person name="Wahlestedt C."/>
            <person name="Mattick J.S."/>
            <person name="Hume D.A."/>
            <person name="Kai C."/>
            <person name="Sasaki D."/>
            <person name="Tomaru Y."/>
            <person name="Fukuda S."/>
            <person name="Kanamori-Katayama M."/>
            <person name="Suzuki M."/>
            <person name="Aoki J."/>
            <person name="Arakawa T."/>
            <person name="Iida J."/>
            <person name="Imamura K."/>
            <person name="Itoh M."/>
            <person name="Kato T."/>
            <person name="Kawaji H."/>
            <person name="Kawagashira N."/>
            <person name="Kawashima T."/>
            <person name="Kojima M."/>
            <person name="Kondo S."/>
            <person name="Konno H."/>
            <person name="Nakano K."/>
            <person name="Ninomiya N."/>
            <person name="Nishio T."/>
            <person name="Okada M."/>
            <person name="Plessy C."/>
            <person name="Shibata K."/>
            <person name="Shiraki T."/>
            <person name="Suzuki S."/>
            <person name="Tagami M."/>
            <person name="Waki K."/>
            <person name="Watahiki A."/>
            <person name="Okamura-Oho Y."/>
            <person name="Suzuki H."/>
            <person name="Kawai J."/>
            <person name="Hayashizaki Y."/>
        </authorList>
    </citation>
    <scope>NUCLEOTIDE SEQUENCE [LARGE SCALE MRNA]</scope>
    <source>
        <strain>C57BL/6J</strain>
        <tissue>Colon</tissue>
    </source>
</reference>
<reference key="3">
    <citation type="journal article" date="2009" name="PLoS Biol.">
        <title>Lineage-specific biology revealed by a finished genome assembly of the mouse.</title>
        <authorList>
            <person name="Church D.M."/>
            <person name="Goodstadt L."/>
            <person name="Hillier L.W."/>
            <person name="Zody M.C."/>
            <person name="Goldstein S."/>
            <person name="She X."/>
            <person name="Bult C.J."/>
            <person name="Agarwala R."/>
            <person name="Cherry J.L."/>
            <person name="DiCuccio M."/>
            <person name="Hlavina W."/>
            <person name="Kapustin Y."/>
            <person name="Meric P."/>
            <person name="Maglott D."/>
            <person name="Birtle Z."/>
            <person name="Marques A.C."/>
            <person name="Graves T."/>
            <person name="Zhou S."/>
            <person name="Teague B."/>
            <person name="Potamousis K."/>
            <person name="Churas C."/>
            <person name="Place M."/>
            <person name="Herschleb J."/>
            <person name="Runnheim R."/>
            <person name="Forrest D."/>
            <person name="Amos-Landgraf J."/>
            <person name="Schwartz D.C."/>
            <person name="Cheng Z."/>
            <person name="Lindblad-Toh K."/>
            <person name="Eichler E.E."/>
            <person name="Ponting C.P."/>
        </authorList>
    </citation>
    <scope>NUCLEOTIDE SEQUENCE [LARGE SCALE GENOMIC DNA]</scope>
    <source>
        <strain>C57BL/6J</strain>
    </source>
</reference>
<reference key="4">
    <citation type="journal article" date="2003" name="Science">
        <title>Dyskeratosis congenita and cancer in mice deficient in ribosomal RNA modification.</title>
        <authorList>
            <person name="Ruggero D."/>
            <person name="Grisendi S."/>
            <person name="Piazza F."/>
            <person name="Rego E."/>
            <person name="Mari F."/>
            <person name="Rao P.H."/>
            <person name="Cordon-Cardo C."/>
            <person name="Pandolfi P.P."/>
        </authorList>
    </citation>
    <scope>FUNCTION</scope>
</reference>
<reference key="5">
    <citation type="journal article" date="2004" name="Proc. Natl. Acad. Sci. U.S.A.">
        <title>Mouse dyskerin mutations affect accumulation of telomerase RNA and small nucleolar RNA, telomerase activity, and ribosomal RNA processing.</title>
        <authorList>
            <person name="Mochizuki Y."/>
            <person name="He J."/>
            <person name="Kulkarni S."/>
            <person name="Bessler M."/>
            <person name="Mason P.J."/>
        </authorList>
    </citation>
    <scope>FUNCTION</scope>
    <scope>MUTAGENESIS OF ALA-353 AND GLY-402</scope>
</reference>
<reference key="6">
    <citation type="journal article" date="2006" name="Mol. Cell. Proteomics">
        <title>Comprehensive identification of phosphorylation sites in postsynaptic density preparations.</title>
        <authorList>
            <person name="Trinidad J.C."/>
            <person name="Specht C.G."/>
            <person name="Thalhammer A."/>
            <person name="Schoepfer R."/>
            <person name="Burlingame A.L."/>
        </authorList>
    </citation>
    <scope>PHOSPHORYLATION [LARGE SCALE ANALYSIS] AT SER-508</scope>
    <scope>IDENTIFICATION BY MASS SPECTROMETRY [LARGE SCALE ANALYSIS]</scope>
    <source>
        <tissue>Brain</tissue>
    </source>
</reference>
<reference key="7">
    <citation type="journal article" date="2007" name="Proc. Natl. Acad. Sci. U.S.A.">
        <title>Large-scale phosphorylation analysis of mouse liver.</title>
        <authorList>
            <person name="Villen J."/>
            <person name="Beausoleil S.A."/>
            <person name="Gerber S.A."/>
            <person name="Gygi S.P."/>
        </authorList>
    </citation>
    <scope>PHOSPHORYLATION [LARGE SCALE ANALYSIS] AT SER-451; SER-453 AND SER-481</scope>
    <scope>IDENTIFICATION BY MASS SPECTROMETRY [LARGE SCALE ANALYSIS]</scope>
    <source>
        <tissue>Liver</tissue>
    </source>
</reference>
<reference key="8">
    <citation type="journal article" date="2008" name="J. Proteome Res.">
        <title>Specific phosphopeptide enrichment with immobilized titanium ion affinity chromatography adsorbent for phosphoproteome analysis.</title>
        <authorList>
            <person name="Zhou H."/>
            <person name="Ye M."/>
            <person name="Dong J."/>
            <person name="Han G."/>
            <person name="Jiang X."/>
            <person name="Wu R."/>
            <person name="Zou H."/>
        </authorList>
    </citation>
    <scope>PHOSPHORYLATION [LARGE SCALE ANALYSIS] AT SER-451; SER-453 AND SER-455</scope>
    <scope>IDENTIFICATION BY MASS SPECTROMETRY [LARGE SCALE ANALYSIS]</scope>
    <source>
        <tissue>Liver</tissue>
    </source>
</reference>
<reference key="9">
    <citation type="journal article" date="2009" name="Immunity">
        <title>The phagosomal proteome in interferon-gamma-activated macrophages.</title>
        <authorList>
            <person name="Trost M."/>
            <person name="English L."/>
            <person name="Lemieux S."/>
            <person name="Courcelles M."/>
            <person name="Desjardins M."/>
            <person name="Thibault P."/>
        </authorList>
    </citation>
    <scope>PHOSPHORYLATION [LARGE SCALE ANALYSIS] AT SER-508</scope>
    <scope>IDENTIFICATION BY MASS SPECTROMETRY [LARGE SCALE ANALYSIS]</scope>
</reference>
<reference key="10">
    <citation type="journal article" date="2009" name="Mol. Cell. Proteomics">
        <title>Large scale localization of protein phosphorylation by use of electron capture dissociation mass spectrometry.</title>
        <authorList>
            <person name="Sweet S.M."/>
            <person name="Bailey C.M."/>
            <person name="Cunningham D.L."/>
            <person name="Heath J.K."/>
            <person name="Cooper H.J."/>
        </authorList>
    </citation>
    <scope>PHOSPHORYLATION [LARGE SCALE ANALYSIS] AT SER-451; SER-453; SER-455 AND SER-508</scope>
    <scope>IDENTIFICATION BY MASS SPECTROMETRY [LARGE SCALE ANALYSIS]</scope>
    <source>
        <tissue>Embryonic fibroblast</tissue>
    </source>
</reference>
<reference key="11">
    <citation type="journal article" date="2010" name="Cell">
        <title>A tissue-specific atlas of mouse protein phosphorylation and expression.</title>
        <authorList>
            <person name="Huttlin E.L."/>
            <person name="Jedrychowski M.P."/>
            <person name="Elias J.E."/>
            <person name="Goswami T."/>
            <person name="Rad R."/>
            <person name="Beausoleil S.A."/>
            <person name="Villen J."/>
            <person name="Haas W."/>
            <person name="Sowa M.E."/>
            <person name="Gygi S.P."/>
        </authorList>
    </citation>
    <scope>PHOSPHORYLATION [LARGE SCALE ANALYSIS] AT SER-451; SER-453; SER-455; THR-458; SER-481; THR-485 AND SER-508</scope>
    <scope>IDENTIFICATION BY MASS SPECTROMETRY [LARGE SCALE ANALYSIS]</scope>
    <source>
        <tissue>Brain</tissue>
        <tissue>Brown adipose tissue</tissue>
        <tissue>Heart</tissue>
        <tissue>Kidney</tissue>
        <tissue>Liver</tissue>
        <tissue>Lung</tissue>
        <tissue>Pancreas</tissue>
        <tissue>Spleen</tissue>
        <tissue>Testis</tissue>
    </source>
</reference>
<organism>
    <name type="scientific">Mus musculus</name>
    <name type="common">Mouse</name>
    <dbReference type="NCBI Taxonomy" id="10090"/>
    <lineage>
        <taxon>Eukaryota</taxon>
        <taxon>Metazoa</taxon>
        <taxon>Chordata</taxon>
        <taxon>Craniata</taxon>
        <taxon>Vertebrata</taxon>
        <taxon>Euteleostomi</taxon>
        <taxon>Mammalia</taxon>
        <taxon>Eutheria</taxon>
        <taxon>Euarchontoglires</taxon>
        <taxon>Glires</taxon>
        <taxon>Rodentia</taxon>
        <taxon>Myomorpha</taxon>
        <taxon>Muroidea</taxon>
        <taxon>Muridae</taxon>
        <taxon>Murinae</taxon>
        <taxon>Mus</taxon>
        <taxon>Mus</taxon>
    </lineage>
</organism>
<sequence>MADAEVITFPKKHKKKKDRKPLQEDDVAEIQHAEEFLIKPESKVAQLDTSQWPLLLKNFDKLNVRTAHYTPLPCGSNPLKREIGDYIRTGFINLDKPSNPSSHEVVAWIRRILRVEKTGHSGTLDPKVTGCLIVCIERATRLVKSQQSAGKEYVGIVRLHNAIEGGTQLSRALETLTGALFQRPPLIAAVKRQLRVRTIYESKMIEYDPERRLGIFWVSCEAGTYIRTLCVHLGLLLGVGGQMQELRRVRSGVMSEKDHMVTMHDVLDAQWLYDNHKDESYLRRVVYPLEKLLTSHKRLVMKDSAVNAICYGAKIMLPGLLRYEDGIEVNQEIVVITTKGEAICMAIALMTTAVISTCDHGIVAKIKRVIMERDTYPRKWGLGPKASQKKMMIKQGLLDKHGKPTDNTPATWKQDYIDYSDSGKNTLVTEAVQAPQLAAEAVNVIKRKRDSESESDETPTVPQLKEKKKKKDKKPKTVLESGGETGDGDNDTTKKKKKKKVKVVEEMSE</sequence>
<comment type="function">
    <text evidence="2 8 9">Catalytic subunit of H/ACA small nucleolar ribonucleoprotein (H/ACA snoRNP) complex, which catalyzes pseudouridylation of rRNA (PubMed:12522253, PubMed:15240872). This involves the isomerization of uridine such that the ribose is subsequently attached to C5, instead of the normal N1. Each rRNA can contain up to 100 pseudouridine ('psi') residues, which may serve to stabilize the conformation of rRNAs (PubMed:12522253, PubMed:15240872). Required for ribosome biogenesis and telomere maintenance (By similarity). Also required for correct processing or intranuclear trafficking of TERC, the RNA component of the telomerase reverse transcriptase (TERT) holoenzyme (By similarity).</text>
</comment>
<comment type="catalytic activity">
    <reaction evidence="2">
        <text>uridine in 5S rRNA = pseudouridine in 5S rRNA</text>
        <dbReference type="Rhea" id="RHEA:47036"/>
        <dbReference type="Rhea" id="RHEA-COMP:11730"/>
        <dbReference type="Rhea" id="RHEA-COMP:11731"/>
        <dbReference type="ChEBI" id="CHEBI:65314"/>
        <dbReference type="ChEBI" id="CHEBI:65315"/>
    </reaction>
</comment>
<comment type="subunit">
    <text evidence="2">Part of the H/ACA small nucleolar ribonucleoprotein (H/ACA snoRNP) complex, which contains NHP2/NOLA2, GAR1/NOLA1, NOP10/NOLA3, and DKC1/NOLA4, which is presumed to be the catalytic subunit. The complex contains a stable core formed by binding of one or two NOP10-DKC1 heterodimers to NHP2; GAR1 subsequently binds to this core via DKC1. The complex binds a box H/ACA small nucleolar RNA (snoRNA), which may target the specific site of modification within the RNA substrate. During assembly, the complex contains NAF1 instead of GAR1/NOLA1. The complex also interacts with TERC, which contains a 3'-terminal domain related to the box H/ACA snoRNAs. Specific interactions with snoRNAs or TERC are mediated by GAR1 and NHP2. Associates with NOLC1/NOPP140. H/ACA snoRNPs interact with the SMN complex, consisting of SMN1 or SMN2, GEMIN2/SIP1, DDX20/GEMIN3, and GEMIN4. This is mediated by interaction between GAR1 and SMN1 or SMN2. The SMN complex may be required for correct assembly of the H/ACA snoRNP complex. Component of the telomerase holoenzyme complex composed of one molecule of TERT, one molecule of WRAP53/TCAB1, two molecules of H/ACA ribonucleoprotein complex subunits DKC1, NOP10, NHP2 and GAR1, and a telomerase RNA template component (TERC). The telomerase holoenzyme complex is associated with TEP1, SMG6/EST1A and POT1. Interacts with SHQ1; this interaction may lead to the stabilization of DKC1, from the time of its synthesis until its association with NOP10, NHP2, and NAF1 at the nascent H/ACA RNA (By similarity). Interacts with HMBOX1 (By similarity). Interacts with DHX36 (By similarity).</text>
</comment>
<comment type="subcellular location">
    <subcellularLocation>
        <location evidence="2">Nucleus</location>
        <location evidence="2">Nucleolus</location>
    </subcellularLocation>
    <subcellularLocation>
        <location evidence="3">Nucleus</location>
        <location evidence="3">Cajal body</location>
    </subcellularLocation>
</comment>
<comment type="tissue specificity">
    <text evidence="7">Ubiquitously expressed, with elevated levels in Purkinje cells, the olfactory bulb, and Leydig cells of the testis.</text>
</comment>
<comment type="developmental stage">
    <text evidence="7">Expressed throughout development, particularly in developing epithelial tissues.</text>
</comment>
<comment type="similarity">
    <text evidence="10">Belongs to the pseudouridine synthase TruB family.</text>
</comment>
<evidence type="ECO:0000250" key="1"/>
<evidence type="ECO:0000250" key="2">
    <source>
        <dbReference type="UniProtKB" id="O60832"/>
    </source>
</evidence>
<evidence type="ECO:0000250" key="3">
    <source>
        <dbReference type="UniProtKB" id="P40615"/>
    </source>
</evidence>
<evidence type="ECO:0000250" key="4">
    <source>
        <dbReference type="UniProtKB" id="P60340"/>
    </source>
</evidence>
<evidence type="ECO:0000255" key="5">
    <source>
        <dbReference type="PROSITE-ProRule" id="PRU00161"/>
    </source>
</evidence>
<evidence type="ECO:0000256" key="6">
    <source>
        <dbReference type="SAM" id="MobiDB-lite"/>
    </source>
</evidence>
<evidence type="ECO:0000269" key="7">
    <source>
    </source>
</evidence>
<evidence type="ECO:0000269" key="8">
    <source>
    </source>
</evidence>
<evidence type="ECO:0000269" key="9">
    <source>
    </source>
</evidence>
<evidence type="ECO:0000305" key="10"/>
<evidence type="ECO:0007744" key="11">
    <source>
    </source>
</evidence>
<evidence type="ECO:0007744" key="12">
    <source>
    </source>
</evidence>
<evidence type="ECO:0007744" key="13">
    <source>
    </source>
</evidence>
<evidence type="ECO:0007744" key="14">
    <source>
    </source>
</evidence>
<evidence type="ECO:0007744" key="15">
    <source>
    </source>
</evidence>
<evidence type="ECO:0007744" key="16">
    <source>
    </source>
</evidence>
<name>DKC1_MOUSE</name>
<keyword id="KW-0007">Acetylation</keyword>
<keyword id="KW-0413">Isomerase</keyword>
<keyword id="KW-1017">Isopeptide bond</keyword>
<keyword id="KW-0539">Nucleus</keyword>
<keyword id="KW-0597">Phosphoprotein</keyword>
<keyword id="KW-1185">Reference proteome</keyword>
<keyword id="KW-0687">Ribonucleoprotein</keyword>
<keyword id="KW-0690">Ribosome biogenesis</keyword>
<keyword id="KW-0694">RNA-binding</keyword>
<keyword id="KW-0698">rRNA processing</keyword>
<keyword id="KW-0832">Ubl conjugation</keyword>